<evidence type="ECO:0000255" key="1">
    <source>
        <dbReference type="HAMAP-Rule" id="MF_01416"/>
    </source>
</evidence>
<organism>
    <name type="scientific">Francisella philomiragia subsp. philomiragia (strain ATCC 25017 / CCUG 19701 / FSC 153 / O#319-036)</name>
    <dbReference type="NCBI Taxonomy" id="484022"/>
    <lineage>
        <taxon>Bacteria</taxon>
        <taxon>Pseudomonadati</taxon>
        <taxon>Pseudomonadota</taxon>
        <taxon>Gammaproteobacteria</taxon>
        <taxon>Thiotrichales</taxon>
        <taxon>Francisellaceae</taxon>
        <taxon>Francisella</taxon>
    </lineage>
</organism>
<comment type="function">
    <text evidence="1">F(1)F(0) ATP synthase produces ATP from ADP in the presence of a proton or sodium gradient. F-type ATPases consist of two structural domains, F(1) containing the extramembraneous catalytic core and F(0) containing the membrane proton channel, linked together by a central stalk and a peripheral stalk. During catalysis, ATP synthesis in the catalytic domain of F(1) is coupled via a rotary mechanism of the central stalk subunits to proton translocation.</text>
</comment>
<comment type="function">
    <text evidence="1">This protein is part of the stalk that links CF(0) to CF(1). It either transmits conformational changes from CF(0) to CF(1) or is implicated in proton conduction.</text>
</comment>
<comment type="subunit">
    <text evidence="1">F-type ATPases have 2 components, F(1) - the catalytic core - and F(0) - the membrane proton channel. F(1) has five subunits: alpha(3), beta(3), gamma(1), delta(1), epsilon(1). F(0) has three main subunits: a(1), b(2) and c(10-14). The alpha and beta chains form an alternating ring which encloses part of the gamma chain. F(1) is attached to F(0) by a central stalk formed by the gamma and epsilon chains, while a peripheral stalk is formed by the delta and b chains.</text>
</comment>
<comment type="subcellular location">
    <subcellularLocation>
        <location evidence="1">Cell inner membrane</location>
        <topology evidence="1">Peripheral membrane protein</topology>
    </subcellularLocation>
</comment>
<comment type="similarity">
    <text evidence="1">Belongs to the ATPase delta chain family.</text>
</comment>
<accession>B0TWS4</accession>
<gene>
    <name evidence="1" type="primary">atpH</name>
    <name type="ordered locus">Fphi_0959</name>
</gene>
<keyword id="KW-0066">ATP synthesis</keyword>
<keyword id="KW-0997">Cell inner membrane</keyword>
<keyword id="KW-1003">Cell membrane</keyword>
<keyword id="KW-0139">CF(1)</keyword>
<keyword id="KW-0375">Hydrogen ion transport</keyword>
<keyword id="KW-0406">Ion transport</keyword>
<keyword id="KW-0472">Membrane</keyword>
<keyword id="KW-0813">Transport</keyword>
<proteinExistence type="inferred from homology"/>
<sequence>MTNLSVIAKPYAKAAFEFANEYNLLQEWSKQLKSFAELVQDDAIAAIISSPEISQTEIINTVKDQLDEKFFNFVALVAENKKLSILPEISFQFENIRNVHNNIKVADVTLAYAIDKNTLANLKTKLEEKFSCSIDMNVIIDPVILGGAVIKVGDTVIDDSVSGRIETLKSILLS</sequence>
<reference key="1">
    <citation type="submission" date="2007-12" db="EMBL/GenBank/DDBJ databases">
        <title>Complete sequence of chromosome of Francisella philomiragia subsp. philomiragia ATCC 25017.</title>
        <authorList>
            <consortium name="US DOE Joint Genome Institute"/>
            <person name="Copeland A."/>
            <person name="Lucas S."/>
            <person name="Lapidus A."/>
            <person name="Barry K."/>
            <person name="Detter J.C."/>
            <person name="Glavina del Rio T."/>
            <person name="Hammon N."/>
            <person name="Israni S."/>
            <person name="Dalin E."/>
            <person name="Tice H."/>
            <person name="Pitluck S."/>
            <person name="Chain P."/>
            <person name="Malfatti S."/>
            <person name="Shin M."/>
            <person name="Vergez L."/>
            <person name="Schmutz J."/>
            <person name="Larimer F."/>
            <person name="Land M."/>
            <person name="Hauser L."/>
            <person name="Richardson P."/>
        </authorList>
    </citation>
    <scope>NUCLEOTIDE SEQUENCE [LARGE SCALE GENOMIC DNA]</scope>
    <source>
        <strain>ATCC 25017 / CCUG 19701 / FSC 153 / O#319-036</strain>
    </source>
</reference>
<dbReference type="EMBL" id="CP000937">
    <property type="protein sequence ID" value="ABZ87182.1"/>
    <property type="molecule type" value="Genomic_DNA"/>
</dbReference>
<dbReference type="SMR" id="B0TWS4"/>
<dbReference type="KEGG" id="fph:Fphi_0959"/>
<dbReference type="eggNOG" id="COG0712">
    <property type="taxonomic scope" value="Bacteria"/>
</dbReference>
<dbReference type="HOGENOM" id="CLU_085114_3_0_6"/>
<dbReference type="GO" id="GO:0005886">
    <property type="term" value="C:plasma membrane"/>
    <property type="evidence" value="ECO:0007669"/>
    <property type="project" value="UniProtKB-SubCell"/>
</dbReference>
<dbReference type="GO" id="GO:0045259">
    <property type="term" value="C:proton-transporting ATP synthase complex"/>
    <property type="evidence" value="ECO:0007669"/>
    <property type="project" value="UniProtKB-KW"/>
</dbReference>
<dbReference type="GO" id="GO:0046933">
    <property type="term" value="F:proton-transporting ATP synthase activity, rotational mechanism"/>
    <property type="evidence" value="ECO:0007669"/>
    <property type="project" value="UniProtKB-UniRule"/>
</dbReference>
<dbReference type="Gene3D" id="1.10.520.20">
    <property type="entry name" value="N-terminal domain of the delta subunit of the F1F0-ATP synthase"/>
    <property type="match status" value="1"/>
</dbReference>
<dbReference type="HAMAP" id="MF_01416">
    <property type="entry name" value="ATP_synth_delta_bact"/>
    <property type="match status" value="1"/>
</dbReference>
<dbReference type="InterPro" id="IPR026015">
    <property type="entry name" value="ATP_synth_OSCP/delta_N_sf"/>
</dbReference>
<dbReference type="InterPro" id="IPR020781">
    <property type="entry name" value="ATPase_OSCP/d_CS"/>
</dbReference>
<dbReference type="InterPro" id="IPR000711">
    <property type="entry name" value="ATPase_OSCP/dsu"/>
</dbReference>
<dbReference type="NCBIfam" id="TIGR01145">
    <property type="entry name" value="ATP_synt_delta"/>
    <property type="match status" value="1"/>
</dbReference>
<dbReference type="NCBIfam" id="NF004402">
    <property type="entry name" value="PRK05758.2-2"/>
    <property type="match status" value="1"/>
</dbReference>
<dbReference type="PANTHER" id="PTHR11910">
    <property type="entry name" value="ATP SYNTHASE DELTA CHAIN"/>
    <property type="match status" value="1"/>
</dbReference>
<dbReference type="Pfam" id="PF00213">
    <property type="entry name" value="OSCP"/>
    <property type="match status" value="1"/>
</dbReference>
<dbReference type="PRINTS" id="PR00125">
    <property type="entry name" value="ATPASEDELTA"/>
</dbReference>
<dbReference type="SUPFAM" id="SSF47928">
    <property type="entry name" value="N-terminal domain of the delta subunit of the F1F0-ATP synthase"/>
    <property type="match status" value="1"/>
</dbReference>
<dbReference type="PROSITE" id="PS00389">
    <property type="entry name" value="ATPASE_DELTA"/>
    <property type="match status" value="1"/>
</dbReference>
<feature type="chain" id="PRO_0000370982" description="ATP synthase subunit delta">
    <location>
        <begin position="1"/>
        <end position="174"/>
    </location>
</feature>
<name>ATPD_FRAP2</name>
<protein>
    <recommendedName>
        <fullName evidence="1">ATP synthase subunit delta</fullName>
    </recommendedName>
    <alternativeName>
        <fullName evidence="1">ATP synthase F(1) sector subunit delta</fullName>
    </alternativeName>
    <alternativeName>
        <fullName evidence="1">F-type ATPase subunit delta</fullName>
        <shortName evidence="1">F-ATPase subunit delta</shortName>
    </alternativeName>
</protein>